<organism>
    <name type="scientific">Anaeromyxobacter dehalogenans (strain 2CP-1 / ATCC BAA-258)</name>
    <dbReference type="NCBI Taxonomy" id="455488"/>
    <lineage>
        <taxon>Bacteria</taxon>
        <taxon>Pseudomonadati</taxon>
        <taxon>Myxococcota</taxon>
        <taxon>Myxococcia</taxon>
        <taxon>Myxococcales</taxon>
        <taxon>Cystobacterineae</taxon>
        <taxon>Anaeromyxobacteraceae</taxon>
        <taxon>Anaeromyxobacter</taxon>
    </lineage>
</organism>
<feature type="chain" id="PRO_1000199110" description="Histidine--tRNA ligase">
    <location>
        <begin position="1"/>
        <end position="414"/>
    </location>
</feature>
<evidence type="ECO:0000255" key="1">
    <source>
        <dbReference type="HAMAP-Rule" id="MF_00127"/>
    </source>
</evidence>
<sequence length="414" mass="45346">MKINGVKGMNDVLPADVARWHEMEAVAREVFALYGYREVRTPAVEHAALFARGVGEATDIVNKEMYVFEDKGEELLALRPEGTAGTVRAFIEHGAFVEGPQKWFYMGPMFRRERPQKGRYRQFHQIGCEAFGVAEPYLDAEQIALLADYFARLGVTAELKLNSVGDAQCRPAYLADLKAYLVANQGALCADCKDRIERNPLRVLDCKVESCQPVLEQAPRLLERLCEPCRAHFDQVKAGLDALGVAYRVEPRLVRGLDYYVRTAYEFTSDALGSQSAVAGGGRYDRLVETLGGPPTPGIGFALGEERLSMILEKVGRAAPERRPAVFFVSADATGALEALRLAAGLRRAGIACELDPRGGKLKAQFKQAERVGARWAVVLGGNEVATGQAKLKDLQTREETPVALSELAARVSG</sequence>
<comment type="catalytic activity">
    <reaction evidence="1">
        <text>tRNA(His) + L-histidine + ATP = L-histidyl-tRNA(His) + AMP + diphosphate + H(+)</text>
        <dbReference type="Rhea" id="RHEA:17313"/>
        <dbReference type="Rhea" id="RHEA-COMP:9665"/>
        <dbReference type="Rhea" id="RHEA-COMP:9689"/>
        <dbReference type="ChEBI" id="CHEBI:15378"/>
        <dbReference type="ChEBI" id="CHEBI:30616"/>
        <dbReference type="ChEBI" id="CHEBI:33019"/>
        <dbReference type="ChEBI" id="CHEBI:57595"/>
        <dbReference type="ChEBI" id="CHEBI:78442"/>
        <dbReference type="ChEBI" id="CHEBI:78527"/>
        <dbReference type="ChEBI" id="CHEBI:456215"/>
        <dbReference type="EC" id="6.1.1.21"/>
    </reaction>
</comment>
<comment type="subunit">
    <text evidence="1">Homodimer.</text>
</comment>
<comment type="subcellular location">
    <subcellularLocation>
        <location evidence="1">Cytoplasm</location>
    </subcellularLocation>
</comment>
<comment type="similarity">
    <text evidence="1">Belongs to the class-II aminoacyl-tRNA synthetase family.</text>
</comment>
<proteinExistence type="inferred from homology"/>
<keyword id="KW-0030">Aminoacyl-tRNA synthetase</keyword>
<keyword id="KW-0067">ATP-binding</keyword>
<keyword id="KW-0963">Cytoplasm</keyword>
<keyword id="KW-0436">Ligase</keyword>
<keyword id="KW-0547">Nucleotide-binding</keyword>
<keyword id="KW-0648">Protein biosynthesis</keyword>
<dbReference type="EC" id="6.1.1.21" evidence="1"/>
<dbReference type="EMBL" id="CP001359">
    <property type="protein sequence ID" value="ACL65783.1"/>
    <property type="molecule type" value="Genomic_DNA"/>
</dbReference>
<dbReference type="RefSeq" id="WP_012633584.1">
    <property type="nucleotide sequence ID" value="NC_011891.1"/>
</dbReference>
<dbReference type="SMR" id="B8JBF6"/>
<dbReference type="KEGG" id="acp:A2cp1_2445"/>
<dbReference type="HOGENOM" id="CLU_025113_1_1_7"/>
<dbReference type="Proteomes" id="UP000007089">
    <property type="component" value="Chromosome"/>
</dbReference>
<dbReference type="GO" id="GO:0005737">
    <property type="term" value="C:cytoplasm"/>
    <property type="evidence" value="ECO:0007669"/>
    <property type="project" value="UniProtKB-SubCell"/>
</dbReference>
<dbReference type="GO" id="GO:0005524">
    <property type="term" value="F:ATP binding"/>
    <property type="evidence" value="ECO:0007669"/>
    <property type="project" value="UniProtKB-UniRule"/>
</dbReference>
<dbReference type="GO" id="GO:0004821">
    <property type="term" value="F:histidine-tRNA ligase activity"/>
    <property type="evidence" value="ECO:0007669"/>
    <property type="project" value="UniProtKB-UniRule"/>
</dbReference>
<dbReference type="GO" id="GO:0006427">
    <property type="term" value="P:histidyl-tRNA aminoacylation"/>
    <property type="evidence" value="ECO:0007669"/>
    <property type="project" value="UniProtKB-UniRule"/>
</dbReference>
<dbReference type="CDD" id="cd00773">
    <property type="entry name" value="HisRS-like_core"/>
    <property type="match status" value="1"/>
</dbReference>
<dbReference type="CDD" id="cd00859">
    <property type="entry name" value="HisRS_anticodon"/>
    <property type="match status" value="1"/>
</dbReference>
<dbReference type="Gene3D" id="3.40.50.800">
    <property type="entry name" value="Anticodon-binding domain"/>
    <property type="match status" value="1"/>
</dbReference>
<dbReference type="Gene3D" id="3.30.930.10">
    <property type="entry name" value="Bira Bifunctional Protein, Domain 2"/>
    <property type="match status" value="1"/>
</dbReference>
<dbReference type="HAMAP" id="MF_00127">
    <property type="entry name" value="His_tRNA_synth"/>
    <property type="match status" value="1"/>
</dbReference>
<dbReference type="InterPro" id="IPR006195">
    <property type="entry name" value="aa-tRNA-synth_II"/>
</dbReference>
<dbReference type="InterPro" id="IPR045864">
    <property type="entry name" value="aa-tRNA-synth_II/BPL/LPL"/>
</dbReference>
<dbReference type="InterPro" id="IPR004154">
    <property type="entry name" value="Anticodon-bd"/>
</dbReference>
<dbReference type="InterPro" id="IPR036621">
    <property type="entry name" value="Anticodon-bd_dom_sf"/>
</dbReference>
<dbReference type="InterPro" id="IPR015807">
    <property type="entry name" value="His-tRNA-ligase"/>
</dbReference>
<dbReference type="InterPro" id="IPR041715">
    <property type="entry name" value="HisRS-like_core"/>
</dbReference>
<dbReference type="InterPro" id="IPR004516">
    <property type="entry name" value="HisRS/HisZ"/>
</dbReference>
<dbReference type="InterPro" id="IPR033656">
    <property type="entry name" value="HisRS_anticodon"/>
</dbReference>
<dbReference type="NCBIfam" id="TIGR00442">
    <property type="entry name" value="hisS"/>
    <property type="match status" value="1"/>
</dbReference>
<dbReference type="PANTHER" id="PTHR43707:SF1">
    <property type="entry name" value="HISTIDINE--TRNA LIGASE, MITOCHONDRIAL-RELATED"/>
    <property type="match status" value="1"/>
</dbReference>
<dbReference type="PANTHER" id="PTHR43707">
    <property type="entry name" value="HISTIDYL-TRNA SYNTHETASE"/>
    <property type="match status" value="1"/>
</dbReference>
<dbReference type="Pfam" id="PF03129">
    <property type="entry name" value="HGTP_anticodon"/>
    <property type="match status" value="1"/>
</dbReference>
<dbReference type="Pfam" id="PF13393">
    <property type="entry name" value="tRNA-synt_His"/>
    <property type="match status" value="1"/>
</dbReference>
<dbReference type="PIRSF" id="PIRSF001549">
    <property type="entry name" value="His-tRNA_synth"/>
    <property type="match status" value="1"/>
</dbReference>
<dbReference type="SUPFAM" id="SSF52954">
    <property type="entry name" value="Class II aaRS ABD-related"/>
    <property type="match status" value="1"/>
</dbReference>
<dbReference type="SUPFAM" id="SSF55681">
    <property type="entry name" value="Class II aaRS and biotin synthetases"/>
    <property type="match status" value="1"/>
</dbReference>
<dbReference type="PROSITE" id="PS50862">
    <property type="entry name" value="AA_TRNA_LIGASE_II"/>
    <property type="match status" value="1"/>
</dbReference>
<accession>B8JBF6</accession>
<name>SYH_ANAD2</name>
<reference key="1">
    <citation type="submission" date="2009-01" db="EMBL/GenBank/DDBJ databases">
        <title>Complete sequence of Anaeromyxobacter dehalogenans 2CP-1.</title>
        <authorList>
            <person name="Lucas S."/>
            <person name="Copeland A."/>
            <person name="Lapidus A."/>
            <person name="Glavina del Rio T."/>
            <person name="Dalin E."/>
            <person name="Tice H."/>
            <person name="Bruce D."/>
            <person name="Goodwin L."/>
            <person name="Pitluck S."/>
            <person name="Saunders E."/>
            <person name="Brettin T."/>
            <person name="Detter J.C."/>
            <person name="Han C."/>
            <person name="Larimer F."/>
            <person name="Land M."/>
            <person name="Hauser L."/>
            <person name="Kyrpides N."/>
            <person name="Ovchinnikova G."/>
            <person name="Beliaev A.S."/>
            <person name="Richardson P."/>
        </authorList>
    </citation>
    <scope>NUCLEOTIDE SEQUENCE [LARGE SCALE GENOMIC DNA]</scope>
    <source>
        <strain>2CP-1 / ATCC BAA-258</strain>
    </source>
</reference>
<gene>
    <name evidence="1" type="primary">hisS</name>
    <name type="ordered locus">A2cp1_2445</name>
</gene>
<protein>
    <recommendedName>
        <fullName evidence="1">Histidine--tRNA ligase</fullName>
        <ecNumber evidence="1">6.1.1.21</ecNumber>
    </recommendedName>
    <alternativeName>
        <fullName evidence="1">Histidyl-tRNA synthetase</fullName>
        <shortName evidence="1">HisRS</shortName>
    </alternativeName>
</protein>